<dbReference type="EMBL" id="X14107">
    <property type="protein sequence ID" value="CAA32266.1"/>
    <property type="status" value="ALT_SEQ"/>
    <property type="molecule type" value="Genomic_DNA"/>
</dbReference>
<dbReference type="EMBL" id="X14107">
    <property type="protein sequence ID" value="CAA32267.1"/>
    <property type="status" value="ALT_SEQ"/>
    <property type="molecule type" value="Genomic_DNA"/>
</dbReference>
<dbReference type="EMBL" id="EF115541">
    <property type="protein sequence ID" value="ABK79441.1"/>
    <property type="status" value="ALT_INIT"/>
    <property type="molecule type" value="Genomic_DNA"/>
</dbReference>
<dbReference type="PIR" id="S04149">
    <property type="entry name" value="S04149"/>
</dbReference>
<dbReference type="PIR" id="S09186">
    <property type="entry name" value="S09186"/>
</dbReference>
<dbReference type="SMR" id="P60161"/>
<dbReference type="GO" id="GO:0009535">
    <property type="term" value="C:chloroplast thylakoid membrane"/>
    <property type="evidence" value="ECO:0007669"/>
    <property type="project" value="UniProtKB-SubCell"/>
</dbReference>
<dbReference type="GO" id="GO:0045158">
    <property type="term" value="F:electron transporter, transferring electrons within cytochrome b6/f complex of photosystem II activity"/>
    <property type="evidence" value="ECO:0007669"/>
    <property type="project" value="UniProtKB-UniRule"/>
</dbReference>
<dbReference type="GO" id="GO:0046872">
    <property type="term" value="F:metal ion binding"/>
    <property type="evidence" value="ECO:0007669"/>
    <property type="project" value="UniProtKB-KW"/>
</dbReference>
<dbReference type="GO" id="GO:0016491">
    <property type="term" value="F:oxidoreductase activity"/>
    <property type="evidence" value="ECO:0007669"/>
    <property type="project" value="InterPro"/>
</dbReference>
<dbReference type="GO" id="GO:0015979">
    <property type="term" value="P:photosynthesis"/>
    <property type="evidence" value="ECO:0007669"/>
    <property type="project" value="UniProtKB-UniRule"/>
</dbReference>
<dbReference type="GO" id="GO:0022904">
    <property type="term" value="P:respiratory electron transport chain"/>
    <property type="evidence" value="ECO:0007669"/>
    <property type="project" value="InterPro"/>
</dbReference>
<dbReference type="CDD" id="cd00284">
    <property type="entry name" value="Cytochrome_b_N"/>
    <property type="match status" value="1"/>
</dbReference>
<dbReference type="FunFam" id="1.20.810.10:FF:000001">
    <property type="entry name" value="Cytochrome b6"/>
    <property type="match status" value="1"/>
</dbReference>
<dbReference type="Gene3D" id="1.20.810.10">
    <property type="entry name" value="Cytochrome Bc1 Complex, Chain C"/>
    <property type="match status" value="1"/>
</dbReference>
<dbReference type="HAMAP" id="MF_00633">
    <property type="entry name" value="Cytb6_f_cytb6"/>
    <property type="match status" value="1"/>
</dbReference>
<dbReference type="InterPro" id="IPR005797">
    <property type="entry name" value="Cyt_b/b6_N"/>
</dbReference>
<dbReference type="InterPro" id="IPR023530">
    <property type="entry name" value="Cyt_B6_PetB"/>
</dbReference>
<dbReference type="InterPro" id="IPR027387">
    <property type="entry name" value="Cytb/b6-like_sf"/>
</dbReference>
<dbReference type="InterPro" id="IPR048259">
    <property type="entry name" value="Cytochrome_b_N_euk/bac"/>
</dbReference>
<dbReference type="InterPro" id="IPR016174">
    <property type="entry name" value="Di-haem_cyt_TM"/>
</dbReference>
<dbReference type="NCBIfam" id="NF002990">
    <property type="entry name" value="PRK03735.1"/>
    <property type="match status" value="1"/>
</dbReference>
<dbReference type="PANTHER" id="PTHR19271">
    <property type="entry name" value="CYTOCHROME B"/>
    <property type="match status" value="1"/>
</dbReference>
<dbReference type="PANTHER" id="PTHR19271:SF16">
    <property type="entry name" value="CYTOCHROME B"/>
    <property type="match status" value="1"/>
</dbReference>
<dbReference type="Pfam" id="PF00033">
    <property type="entry name" value="Cytochrome_B"/>
    <property type="match status" value="1"/>
</dbReference>
<dbReference type="PIRSF" id="PIRSF000032">
    <property type="entry name" value="Cytochrome_b6"/>
    <property type="match status" value="1"/>
</dbReference>
<dbReference type="SUPFAM" id="SSF81342">
    <property type="entry name" value="Transmembrane di-heme cytochromes"/>
    <property type="match status" value="1"/>
</dbReference>
<dbReference type="PROSITE" id="PS51002">
    <property type="entry name" value="CYTB_NTER"/>
    <property type="match status" value="1"/>
</dbReference>
<evidence type="ECO:0000250" key="1"/>
<evidence type="ECO:0000255" key="2">
    <source>
        <dbReference type="HAMAP-Rule" id="MF_00633"/>
    </source>
</evidence>
<evidence type="ECO:0000305" key="3"/>
<accession>P60161</accession>
<accession>A1E9M0</accession>
<accession>P12362</accession>
<accession>Q32438</accession>
<sequence length="215" mass="24183">MSKVYDWFEERLEIQAIADDITSKYVPPHVNIFYCLGGITLTCFLVQVATGFAMTFYYRPTVTEAFSSVQYIMTEANFGWLIRSVHRWSASMMVLMMILHVFRVYLTGGFKKPRELTWVTGVVLAVLTASFGVTGYSLPWDQIGYWAVKIVTGVPDAIPVIGSPLVELLRGSASVGQSTLTRFYSLHTFVLPLLTAVFMLMHFLMIRKQGISGPL</sequence>
<reference key="1">
    <citation type="journal article" date="1989" name="Nucleic Acids Res.">
        <title>Nucleotide sequence of the 5.2 kbp barley chloroplast DNA fragment, containing psbB-psbH-petB-petD gene cluster.</title>
        <authorList>
            <person name="Andreeva A.V."/>
            <person name="Buryakova A.A."/>
            <person name="Reverdatto S.V."/>
            <person name="Chakhmakhcheva O.G."/>
            <person name="Efimov V.A."/>
        </authorList>
    </citation>
    <scope>NUCLEOTIDE SEQUENCE [GENOMIC DNA] (ISOFORMS 1 AND 2)</scope>
    <source>
        <strain>cv. Sabarlis</strain>
    </source>
</reference>
<reference key="2">
    <citation type="journal article" date="1991" name="Bioorg. Khim.">
        <title>Photosystem II of rye. Nucleotide sequence of the psbB, psbC, psbE, psbF, psbH genes of rye and chloroplast DNA regions adjacent to them.</title>
        <authorList>
            <person name="Efimov V.A."/>
            <person name="Andreeva A.V."/>
            <person name="Reverdatto S.V."/>
            <person name="Chakhmakhcheva O.G."/>
        </authorList>
    </citation>
    <scope>NUCLEOTIDE SEQUENCE [GENOMIC DNA] (ISOFORM 1)</scope>
    <source>
        <strain>cv. Sabarlis</strain>
    </source>
</reference>
<reference key="3">
    <citation type="journal article" date="2007" name="Theor. Appl. Genet.">
        <title>Complete chloroplast genome sequences of Hordeum vulgare, Sorghum bicolor and Agrostis stolonifera, and comparative analyses with other grass genomes.</title>
        <authorList>
            <person name="Saski C."/>
            <person name="Lee S.-B."/>
            <person name="Fjellheim S."/>
            <person name="Guda C."/>
            <person name="Jansen R.K."/>
            <person name="Luo H."/>
            <person name="Tomkins J."/>
            <person name="Rognli O.A."/>
            <person name="Daniell H."/>
            <person name="Clarke J.L."/>
        </authorList>
    </citation>
    <scope>NUCLEOTIDE SEQUENCE [LARGE SCALE GENOMIC DNA]</scope>
    <source>
        <strain>cv. Morex</strain>
    </source>
</reference>
<gene>
    <name evidence="2" type="primary">petB</name>
</gene>
<feature type="chain" id="PRO_0000061797" description="Cytochrome b6">
    <location>
        <begin position="1"/>
        <end position="215"/>
    </location>
</feature>
<feature type="transmembrane region" description="Helical" evidence="2">
    <location>
        <begin position="32"/>
        <end position="52"/>
    </location>
</feature>
<feature type="transmembrane region" description="Helical" evidence="2">
    <location>
        <begin position="90"/>
        <end position="110"/>
    </location>
</feature>
<feature type="transmembrane region" description="Helical" evidence="2">
    <location>
        <begin position="116"/>
        <end position="136"/>
    </location>
</feature>
<feature type="transmembrane region" description="Helical" evidence="2">
    <location>
        <begin position="186"/>
        <end position="206"/>
    </location>
</feature>
<feature type="binding site" description="covalent" evidence="2">
    <location>
        <position position="35"/>
    </location>
    <ligand>
        <name>heme c</name>
        <dbReference type="ChEBI" id="CHEBI:61717"/>
    </ligand>
</feature>
<feature type="binding site" description="axial binding residue" evidence="2">
    <location>
        <position position="86"/>
    </location>
    <ligand>
        <name>heme b</name>
        <dbReference type="ChEBI" id="CHEBI:60344"/>
        <label>2</label>
    </ligand>
    <ligandPart>
        <name>Fe</name>
        <dbReference type="ChEBI" id="CHEBI:18248"/>
    </ligandPart>
</feature>
<feature type="binding site" description="axial binding residue" evidence="2">
    <location>
        <position position="100"/>
    </location>
    <ligand>
        <name>heme b</name>
        <dbReference type="ChEBI" id="CHEBI:60344"/>
        <label>1</label>
    </ligand>
    <ligandPart>
        <name>Fe</name>
        <dbReference type="ChEBI" id="CHEBI:18248"/>
    </ligandPart>
</feature>
<feature type="binding site" description="axial binding residue" evidence="2">
    <location>
        <position position="187"/>
    </location>
    <ligand>
        <name>heme b</name>
        <dbReference type="ChEBI" id="CHEBI:60344"/>
        <label>2</label>
    </ligand>
    <ligandPart>
        <name>Fe</name>
        <dbReference type="ChEBI" id="CHEBI:18248"/>
    </ligandPart>
</feature>
<feature type="binding site" description="axial binding residue" evidence="2">
    <location>
        <position position="202"/>
    </location>
    <ligand>
        <name>heme b</name>
        <dbReference type="ChEBI" id="CHEBI:60344"/>
        <label>1</label>
    </ligand>
    <ligandPart>
        <name>Fe</name>
        <dbReference type="ChEBI" id="CHEBI:18248"/>
    </ligandPart>
</feature>
<feature type="splice variant" id="VSP_007118" description="In isoform 2." evidence="3">
    <original>MS</original>
    <variation>MKFSYTALRGGRGLVTYLN</variation>
    <location>
        <begin position="1"/>
        <end position="2"/>
    </location>
</feature>
<geneLocation type="chloroplast"/>
<protein>
    <recommendedName>
        <fullName evidence="2">Cytochrome b6</fullName>
    </recommendedName>
</protein>
<name>CYB6_HORVU</name>
<proteinExistence type="inferred from homology"/>
<comment type="function">
    <text evidence="2">Component of the cytochrome b6-f complex, which mediates electron transfer between photosystem II (PSII) and photosystem I (PSI), cyclic electron flow around PSI, and state transitions.</text>
</comment>
<comment type="cofactor">
    <cofactor evidence="2">
        <name>heme b</name>
        <dbReference type="ChEBI" id="CHEBI:60344"/>
    </cofactor>
    <text evidence="2">Binds 2 heme b groups non-covalently with two histidine residues as axial ligands.</text>
</comment>
<comment type="cofactor">
    <cofactor evidence="2">
        <name>heme c</name>
        <dbReference type="ChEBI" id="CHEBI:61717"/>
    </cofactor>
    <text evidence="2">Binds one heme group covalently by a single cysteine link with no axial amino acid ligand. This heme was named heme ci.</text>
</comment>
<comment type="subunit">
    <text evidence="2">The 4 large subunits of the cytochrome b6-f complex are cytochrome b6, subunit IV (17 kDa polypeptide, PetD), cytochrome f and the Rieske protein, while the 4 small subunits are PetG, PetL, PetM and PetN. The complex functions as a dimer.</text>
</comment>
<comment type="subcellular location">
    <subcellularLocation>
        <location evidence="2">Plastid</location>
        <location evidence="2">Chloroplast thylakoid membrane</location>
        <topology evidence="2">Multi-pass membrane protein</topology>
    </subcellularLocation>
</comment>
<comment type="alternative products">
    <event type="alternative splicing"/>
    <isoform>
        <id>P60161-1</id>
        <name>1</name>
        <sequence type="displayed"/>
    </isoform>
    <isoform>
        <id>P60161-2</id>
        <name>2</name>
        <sequence type="described" ref="VSP_007118"/>
    </isoform>
</comment>
<comment type="RNA editing">
    <location>
        <position position="204" evidence="1"/>
    </location>
</comment>
<comment type="miscellaneous">
    <text evidence="2">Heme 1 (or BH or b566) is high-potential and absorbs at about 566 nm, and heme 2 (or BL or b562) is low-potential and absorbs at about 562 nm.</text>
</comment>
<comment type="miscellaneous">
    <molecule>Isoform 2</molecule>
    <text evidence="3">Unspliced isoform.</text>
</comment>
<comment type="similarity">
    <text evidence="2">Belongs to the cytochrome b family. PetB subfamily.</text>
</comment>
<comment type="sequence caution" evidence="3">
    <conflict type="erroneous initiation">
        <sequence resource="EMBL-CDS" id="ABK79441"/>
    </conflict>
</comment>
<comment type="sequence caution" evidence="3">
    <molecule>Isoform 2</molecule>
    <conflict type="miscellaneous discrepancy">
        <sequence resource="EMBL-CDS" id="ABK79441"/>
    </conflict>
    <text>wrong initiation.</text>
</comment>
<organism>
    <name type="scientific">Hordeum vulgare</name>
    <name type="common">Barley</name>
    <dbReference type="NCBI Taxonomy" id="4513"/>
    <lineage>
        <taxon>Eukaryota</taxon>
        <taxon>Viridiplantae</taxon>
        <taxon>Streptophyta</taxon>
        <taxon>Embryophyta</taxon>
        <taxon>Tracheophyta</taxon>
        <taxon>Spermatophyta</taxon>
        <taxon>Magnoliopsida</taxon>
        <taxon>Liliopsida</taxon>
        <taxon>Poales</taxon>
        <taxon>Poaceae</taxon>
        <taxon>BOP clade</taxon>
        <taxon>Pooideae</taxon>
        <taxon>Triticodae</taxon>
        <taxon>Triticeae</taxon>
        <taxon>Hordeinae</taxon>
        <taxon>Hordeum</taxon>
    </lineage>
</organism>
<keyword id="KW-0025">Alternative splicing</keyword>
<keyword id="KW-0150">Chloroplast</keyword>
<keyword id="KW-0249">Electron transport</keyword>
<keyword id="KW-0349">Heme</keyword>
<keyword id="KW-0408">Iron</keyword>
<keyword id="KW-0472">Membrane</keyword>
<keyword id="KW-0479">Metal-binding</keyword>
<keyword id="KW-0602">Photosynthesis</keyword>
<keyword id="KW-0934">Plastid</keyword>
<keyword id="KW-0691">RNA editing</keyword>
<keyword id="KW-0793">Thylakoid</keyword>
<keyword id="KW-0812">Transmembrane</keyword>
<keyword id="KW-1133">Transmembrane helix</keyword>
<keyword id="KW-0813">Transport</keyword>